<reference key="1">
    <citation type="journal article" date="2014" name="PLoS ONE">
        <title>Diversity of conotoxin gene superfamilies in the venomous snail, Conus victoriae.</title>
        <authorList>
            <person name="Robinson S.D."/>
            <person name="Safavi-Hemami H."/>
            <person name="McIntosh L.D."/>
            <person name="Purcell A.W."/>
            <person name="Norton R.S."/>
            <person name="Papenfuss A.T."/>
        </authorList>
    </citation>
    <scope>NUCLEOTIDE SEQUENCE [MRNA]</scope>
</reference>
<reference key="2">
    <citation type="journal article" date="2017" name="Gen. Comp. Endocrinol.">
        <title>Hormone-like peptides in the venoms of marine cone snails.</title>
        <authorList>
            <person name="Robinson S.D."/>
            <person name="Li Q."/>
            <person name="Bandyopadhyay P.K."/>
            <person name="Gajewiak J."/>
            <person name="Yandell M."/>
            <person name="Papenfuss A.T."/>
            <person name="Purcell A.W."/>
            <person name="Norton R.S."/>
            <person name="Safavi-Hemami H."/>
        </authorList>
    </citation>
    <scope>NUCLEOTIDE SEQUENCE [MRNA]</scope>
    <scope>PROTEIN SEQUENCE OF 26-36</scope>
    <scope>MASS SPECTROMETRY</scope>
    <scope>SUBUNIT</scope>
    <scope>DISULFIDE BOND</scope>
</reference>
<feature type="signal peptide" evidence="2">
    <location>
        <begin position="1"/>
        <end position="25"/>
    </location>
</feature>
<feature type="peptide" id="PRO_0000439366" description="Neuropeptide prohormone-4">
    <location>
        <begin position="26"/>
        <end position="196"/>
    </location>
</feature>
<feature type="domain" description="LDL-receptor class A" evidence="1">
    <location>
        <begin position="50"/>
        <end position="90"/>
    </location>
</feature>
<feature type="disulfide bond" evidence="1">
    <location>
        <begin position="51"/>
        <end position="65"/>
    </location>
</feature>
<feature type="disulfide bond" evidence="1">
    <location>
        <begin position="59"/>
        <end position="78"/>
    </location>
</feature>
<feature type="disulfide bond" evidence="1">
    <location>
        <begin position="72"/>
        <end position="89"/>
    </location>
</feature>
<dbReference type="EMBL" id="GAIH01000103">
    <property type="protein sequence ID" value="JAI08986.1"/>
    <property type="molecule type" value="mRNA"/>
</dbReference>
<dbReference type="SMR" id="A0A0F7YYX3"/>
<dbReference type="GO" id="GO:0005576">
    <property type="term" value="C:extracellular region"/>
    <property type="evidence" value="ECO:0007669"/>
    <property type="project" value="UniProtKB-SubCell"/>
</dbReference>
<dbReference type="CDD" id="cd00112">
    <property type="entry name" value="LDLa"/>
    <property type="match status" value="1"/>
</dbReference>
<dbReference type="Gene3D" id="4.10.400.10">
    <property type="entry name" value="Low-density Lipoprotein Receptor"/>
    <property type="match status" value="1"/>
</dbReference>
<dbReference type="InterPro" id="IPR036055">
    <property type="entry name" value="LDL_receptor-like_sf"/>
</dbReference>
<dbReference type="InterPro" id="IPR023415">
    <property type="entry name" value="LDLR_class-A_CS"/>
</dbReference>
<dbReference type="InterPro" id="IPR002172">
    <property type="entry name" value="LDrepeatLR_classA_rpt"/>
</dbReference>
<dbReference type="SMART" id="SM00192">
    <property type="entry name" value="LDLa"/>
    <property type="match status" value="1"/>
</dbReference>
<dbReference type="SUPFAM" id="SSF57424">
    <property type="entry name" value="LDL receptor-like module"/>
    <property type="match status" value="1"/>
</dbReference>
<dbReference type="PROSITE" id="PS01209">
    <property type="entry name" value="LDLRA_1"/>
    <property type="match status" value="1"/>
</dbReference>
<dbReference type="PROSITE" id="PS50068">
    <property type="entry name" value="LDLRA_2"/>
    <property type="match status" value="1"/>
</dbReference>
<protein>
    <recommendedName>
        <fullName evidence="3">Neuropeptide prohormone-4</fullName>
    </recommendedName>
</protein>
<sequence>MSSPLRMDVTFLLAAIAVTWVCGLKIGFPGFSTPPRSFIQHPKRTLCPEDCDIASPFKCEESPTCLRLFQVCNGRWDCEHGSDEDNALCAAVLRPLECMIWEFLEGQRDWILPNLFNDANTDLVAHALHEAYSMGDLQSYLNLTDQNIENIRNSTRGAIVGDPRPLMALGMPDRAWPEVMYLLKELYNLGLDVWAE</sequence>
<keyword id="KW-0903">Direct protein sequencing</keyword>
<keyword id="KW-1015">Disulfide bond</keyword>
<keyword id="KW-0964">Secreted</keyword>
<keyword id="KW-0732">Signal</keyword>
<organism>
    <name type="scientific">Conus victoriae</name>
    <name type="common">Queen Victoria cone</name>
    <dbReference type="NCBI Taxonomy" id="319920"/>
    <lineage>
        <taxon>Eukaryota</taxon>
        <taxon>Metazoa</taxon>
        <taxon>Spiralia</taxon>
        <taxon>Lophotrochozoa</taxon>
        <taxon>Mollusca</taxon>
        <taxon>Gastropoda</taxon>
        <taxon>Caenogastropoda</taxon>
        <taxon>Neogastropoda</taxon>
        <taxon>Conoidea</taxon>
        <taxon>Conidae</taxon>
        <taxon>Conus</taxon>
        <taxon>Cylinder</taxon>
    </lineage>
</organism>
<comment type="subcellular location">
    <subcellularLocation>
        <location evidence="2">Secreted</location>
    </subcellularLocation>
</comment>
<comment type="tissue specificity">
    <text evidence="2">Expressed by the venom duct.</text>
</comment>
<accession>A0A0F7YYX3</accession>
<evidence type="ECO:0000255" key="1">
    <source>
        <dbReference type="PROSITE-ProRule" id="PRU00124"/>
    </source>
</evidence>
<evidence type="ECO:0000269" key="2">
    <source>
    </source>
</evidence>
<evidence type="ECO:0000303" key="3">
    <source>
    </source>
</evidence>
<name>CPROH_CONVC</name>
<proteinExistence type="evidence at protein level"/>